<keyword id="KW-0106">Calcium</keyword>
<keyword id="KW-0249">Electron transport</keyword>
<keyword id="KW-0349">Heme</keyword>
<keyword id="KW-0408">Iron</keyword>
<keyword id="KW-0479">Metal-binding</keyword>
<keyword id="KW-0560">Oxidoreductase</keyword>
<keyword id="KW-0574">Periplasm</keyword>
<keyword id="KW-0732">Signal</keyword>
<keyword id="KW-0813">Transport</keyword>
<sequence length="467" mass="51955">MMKKMTGKSFALSALVAASFMAAGAMASDKTEPRNEVYKDKFANQYNSWHDTAKSEEITDALAGDPSLVILWAGYGFAKDYNAPRGHMYAVTDVRNTLRTGAPTNAEDGPMPMACWSCKSPDVPRLIEEQGEDGYFKGKWAKGGPEVVNTIGCSDCHEKGTPKLRISRPFAERGMEALGTPFDKASKKDKQSMVCGQCHVEYYFEKKDDRKGFVKFPWDSGTTVEQMEAYYDAIEFSDWTHSLSKTPMLKAQHPGYETWKMGVHGKNDVSCVDCHMPKVTNDKGRKYTDHKVGNPFDRFDETCATCHSQSKEFLEGITKERYAKVKELKARAEGQLVKAHFEAAKAWEVGATEAEMKPILTDIRHAQWRWDFAIASHGVAAHAPEEALRILGTAVDKAADARVKLAQLLAKKGVTDAVAIPDISTKAKAQAALGMDMDKMNAEKEAFKKDMLPKWDAEAKKREATYK</sequence>
<protein>
    <recommendedName>
        <fullName evidence="1">Cytochrome c-552</fullName>
        <ecNumber evidence="1">1.7.2.2</ecNumber>
    </recommendedName>
    <alternativeName>
        <fullName evidence="1">Ammonia-forming cytochrome c nitrite reductase</fullName>
        <shortName evidence="1">Cytochrome c nitrite reductase</shortName>
    </alternativeName>
</protein>
<organism>
    <name type="scientific">Shewanella sp. (strain MR-7)</name>
    <dbReference type="NCBI Taxonomy" id="60481"/>
    <lineage>
        <taxon>Bacteria</taxon>
        <taxon>Pseudomonadati</taxon>
        <taxon>Pseudomonadota</taxon>
        <taxon>Gammaproteobacteria</taxon>
        <taxon>Alteromonadales</taxon>
        <taxon>Shewanellaceae</taxon>
        <taxon>Shewanella</taxon>
    </lineage>
</organism>
<feature type="signal peptide" evidence="1">
    <location>
        <begin position="1"/>
        <end position="27"/>
    </location>
</feature>
<feature type="chain" id="PRO_0000268977" description="Cytochrome c-552">
    <location>
        <begin position="28"/>
        <end position="467"/>
    </location>
</feature>
<feature type="binding site" description="axial binding residue" evidence="1">
    <location>
        <position position="87"/>
    </location>
    <ligand>
        <name>heme c</name>
        <dbReference type="ChEBI" id="CHEBI:61717"/>
        <label>3</label>
    </ligand>
    <ligandPart>
        <name>Fe</name>
        <dbReference type="ChEBI" id="CHEBI:18248"/>
    </ligandPart>
</feature>
<feature type="binding site" description="covalent" evidence="1">
    <location>
        <position position="115"/>
    </location>
    <ligand>
        <name>heme</name>
        <dbReference type="ChEBI" id="CHEBI:30413"/>
        <label>1</label>
    </ligand>
</feature>
<feature type="binding site" description="covalent" evidence="1">
    <location>
        <position position="118"/>
    </location>
    <ligand>
        <name>heme</name>
        <dbReference type="ChEBI" id="CHEBI:30413"/>
        <label>1</label>
    </ligand>
</feature>
<feature type="binding site" description="axial binding residue" evidence="1">
    <location>
        <position position="119"/>
    </location>
    <ligand>
        <name>heme</name>
        <dbReference type="ChEBI" id="CHEBI:30413"/>
        <label>1</label>
    </ligand>
    <ligandPart>
        <name>Fe</name>
        <dbReference type="ChEBI" id="CHEBI:18248"/>
    </ligandPart>
</feature>
<feature type="binding site" description="covalent" evidence="1">
    <location>
        <position position="153"/>
    </location>
    <ligand>
        <name>heme c</name>
        <dbReference type="ChEBI" id="CHEBI:61717"/>
        <label>2</label>
    </ligand>
</feature>
<feature type="binding site" description="covalent" evidence="1">
    <location>
        <position position="156"/>
    </location>
    <ligand>
        <name>heme c</name>
        <dbReference type="ChEBI" id="CHEBI:61717"/>
        <label>2</label>
    </ligand>
</feature>
<feature type="binding site" description="axial binding residue" evidence="1">
    <location>
        <position position="157"/>
    </location>
    <ligand>
        <name>heme c</name>
        <dbReference type="ChEBI" id="CHEBI:61717"/>
        <label>2</label>
    </ligand>
    <ligandPart>
        <name>Fe</name>
        <dbReference type="ChEBI" id="CHEBI:18248"/>
    </ligandPart>
</feature>
<feature type="binding site" description="covalent" evidence="1">
    <location>
        <position position="195"/>
    </location>
    <ligand>
        <name>heme c</name>
        <dbReference type="ChEBI" id="CHEBI:61717"/>
        <label>3</label>
    </ligand>
</feature>
<feature type="binding site" description="covalent" evidence="1">
    <location>
        <position position="198"/>
    </location>
    <ligand>
        <name>heme c</name>
        <dbReference type="ChEBI" id="CHEBI:61717"/>
        <label>3</label>
    </ligand>
</feature>
<feature type="binding site" description="axial binding residue" evidence="1">
    <location>
        <position position="199"/>
    </location>
    <ligand>
        <name>heme c</name>
        <dbReference type="ChEBI" id="CHEBI:61717"/>
        <label>3</label>
    </ligand>
    <ligandPart>
        <name>Fe</name>
        <dbReference type="ChEBI" id="CHEBI:18248"/>
    </ligandPart>
</feature>
<feature type="binding site" evidence="1">
    <location>
        <position position="201"/>
    </location>
    <ligand>
        <name>Ca(2+)</name>
        <dbReference type="ChEBI" id="CHEBI:29108"/>
    </ligand>
</feature>
<feature type="binding site" evidence="1">
    <location>
        <position position="202"/>
    </location>
    <ligand>
        <name>Ca(2+)</name>
        <dbReference type="ChEBI" id="CHEBI:29108"/>
    </ligand>
</feature>
<feature type="binding site" evidence="1">
    <location>
        <position position="202"/>
    </location>
    <ligand>
        <name>substrate</name>
    </ligand>
</feature>
<feature type="binding site" evidence="1">
    <location>
        <position position="250"/>
    </location>
    <ligand>
        <name>Ca(2+)</name>
        <dbReference type="ChEBI" id="CHEBI:29108"/>
    </ligand>
</feature>
<feature type="binding site" evidence="1">
    <location>
        <position position="252"/>
    </location>
    <ligand>
        <name>Ca(2+)</name>
        <dbReference type="ChEBI" id="CHEBI:29108"/>
    </ligand>
</feature>
<feature type="binding site" evidence="1">
    <location>
        <position position="253"/>
    </location>
    <ligand>
        <name>substrate</name>
    </ligand>
</feature>
<feature type="binding site" description="axial binding residue" evidence="1">
    <location>
        <position position="264"/>
    </location>
    <ligand>
        <name>heme c</name>
        <dbReference type="ChEBI" id="CHEBI:61717"/>
        <label>5</label>
    </ligand>
    <ligandPart>
        <name>Fe</name>
        <dbReference type="ChEBI" id="CHEBI:18248"/>
    </ligandPart>
</feature>
<feature type="binding site" description="covalent" evidence="1">
    <location>
        <position position="271"/>
    </location>
    <ligand>
        <name>heme c</name>
        <dbReference type="ChEBI" id="CHEBI:61717"/>
        <label>4</label>
    </ligand>
</feature>
<feature type="binding site" description="covalent" evidence="1">
    <location>
        <position position="274"/>
    </location>
    <ligand>
        <name>heme c</name>
        <dbReference type="ChEBI" id="CHEBI:61717"/>
        <label>4</label>
    </ligand>
</feature>
<feature type="binding site" description="axial binding residue" evidence="1">
    <location>
        <position position="275"/>
    </location>
    <ligand>
        <name>heme c</name>
        <dbReference type="ChEBI" id="CHEBI:61717"/>
        <label>4</label>
    </ligand>
    <ligandPart>
        <name>Fe</name>
        <dbReference type="ChEBI" id="CHEBI:18248"/>
    </ligandPart>
</feature>
<feature type="binding site" description="axial binding residue" evidence="1">
    <location>
        <position position="290"/>
    </location>
    <ligand>
        <name>heme c</name>
        <dbReference type="ChEBI" id="CHEBI:61717"/>
        <label>2</label>
    </ligand>
    <ligandPart>
        <name>Fe</name>
        <dbReference type="ChEBI" id="CHEBI:18248"/>
    </ligandPart>
</feature>
<feature type="binding site" description="covalent" evidence="1">
    <location>
        <position position="303"/>
    </location>
    <ligand>
        <name>heme c</name>
        <dbReference type="ChEBI" id="CHEBI:61717"/>
        <label>5</label>
    </ligand>
</feature>
<feature type="binding site" description="covalent" evidence="1">
    <location>
        <position position="306"/>
    </location>
    <ligand>
        <name>heme c</name>
        <dbReference type="ChEBI" id="CHEBI:61717"/>
        <label>5</label>
    </ligand>
</feature>
<feature type="binding site" description="axial binding residue" evidence="1">
    <location>
        <position position="307"/>
    </location>
    <ligand>
        <name>heme c</name>
        <dbReference type="ChEBI" id="CHEBI:61717"/>
        <label>5</label>
    </ligand>
    <ligandPart>
        <name>Fe</name>
        <dbReference type="ChEBI" id="CHEBI:18248"/>
    </ligandPart>
</feature>
<feature type="binding site" description="axial binding residue" evidence="1">
    <location>
        <position position="382"/>
    </location>
    <ligand>
        <name>heme c</name>
        <dbReference type="ChEBI" id="CHEBI:61717"/>
        <label>4</label>
    </ligand>
    <ligandPart>
        <name>Fe</name>
        <dbReference type="ChEBI" id="CHEBI:18248"/>
    </ligandPart>
</feature>
<name>NRFA_SHESR</name>
<comment type="function">
    <text evidence="1">Catalyzes the reduction of nitrite to ammonia, consuming six electrons in the process.</text>
</comment>
<comment type="catalytic activity">
    <reaction evidence="1">
        <text>6 Fe(III)-[cytochrome c] + NH4(+) + 2 H2O = 6 Fe(II)-[cytochrome c] + nitrite + 8 H(+)</text>
        <dbReference type="Rhea" id="RHEA:13089"/>
        <dbReference type="Rhea" id="RHEA-COMP:10350"/>
        <dbReference type="Rhea" id="RHEA-COMP:14399"/>
        <dbReference type="ChEBI" id="CHEBI:15377"/>
        <dbReference type="ChEBI" id="CHEBI:15378"/>
        <dbReference type="ChEBI" id="CHEBI:16301"/>
        <dbReference type="ChEBI" id="CHEBI:28938"/>
        <dbReference type="ChEBI" id="CHEBI:29033"/>
        <dbReference type="ChEBI" id="CHEBI:29034"/>
        <dbReference type="EC" id="1.7.2.2"/>
    </reaction>
</comment>
<comment type="cofactor">
    <cofactor evidence="1">
        <name>Ca(2+)</name>
        <dbReference type="ChEBI" id="CHEBI:29108"/>
    </cofactor>
    <text evidence="1">Binds 1 Ca(2+) ion per monomer.</text>
</comment>
<comment type="cofactor">
    <cofactor evidence="1">
        <name>heme c</name>
        <dbReference type="ChEBI" id="CHEBI:61717"/>
    </cofactor>
    <text evidence="1">Binds 5 heme c groups covalently per monomer.</text>
</comment>
<comment type="pathway">
    <text evidence="1">Nitrogen metabolism; nitrate reduction (assimilation).</text>
</comment>
<comment type="subcellular location">
    <subcellularLocation>
        <location evidence="1">Periplasm</location>
    </subcellularLocation>
</comment>
<comment type="similarity">
    <text evidence="1">Belongs to the cytochrome c-552 family.</text>
</comment>
<comment type="sequence caution" evidence="2">
    <conflict type="erroneous initiation">
        <sequence resource="EMBL-CDS" id="ABI44345"/>
    </conflict>
</comment>
<gene>
    <name evidence="1" type="primary">nrfA</name>
    <name type="ordered locus">Shewmr7_3363</name>
</gene>
<accession>Q0HRB0</accession>
<dbReference type="EC" id="1.7.2.2" evidence="1"/>
<dbReference type="EMBL" id="CP000444">
    <property type="protein sequence ID" value="ABI44345.1"/>
    <property type="status" value="ALT_INIT"/>
    <property type="molecule type" value="Genomic_DNA"/>
</dbReference>
<dbReference type="SMR" id="Q0HRB0"/>
<dbReference type="KEGG" id="shm:Shewmr7_3363"/>
<dbReference type="HOGENOM" id="CLU_035040_1_0_6"/>
<dbReference type="UniPathway" id="UPA00653"/>
<dbReference type="GO" id="GO:0030288">
    <property type="term" value="C:outer membrane-bounded periplasmic space"/>
    <property type="evidence" value="ECO:0007669"/>
    <property type="project" value="TreeGrafter"/>
</dbReference>
<dbReference type="GO" id="GO:0005509">
    <property type="term" value="F:calcium ion binding"/>
    <property type="evidence" value="ECO:0007669"/>
    <property type="project" value="UniProtKB-UniRule"/>
</dbReference>
<dbReference type="GO" id="GO:0020037">
    <property type="term" value="F:heme binding"/>
    <property type="evidence" value="ECO:0007669"/>
    <property type="project" value="InterPro"/>
</dbReference>
<dbReference type="GO" id="GO:0005506">
    <property type="term" value="F:iron ion binding"/>
    <property type="evidence" value="ECO:0007669"/>
    <property type="project" value="UniProtKB-UniRule"/>
</dbReference>
<dbReference type="GO" id="GO:0042279">
    <property type="term" value="F:nitrite reductase (cytochrome, ammonia-forming) activity"/>
    <property type="evidence" value="ECO:0007669"/>
    <property type="project" value="UniProtKB-UniRule"/>
</dbReference>
<dbReference type="GO" id="GO:0019645">
    <property type="term" value="P:anaerobic electron transport chain"/>
    <property type="evidence" value="ECO:0007669"/>
    <property type="project" value="TreeGrafter"/>
</dbReference>
<dbReference type="GO" id="GO:0042128">
    <property type="term" value="P:nitrate assimilation"/>
    <property type="evidence" value="ECO:0007669"/>
    <property type="project" value="UniProtKB-UniRule"/>
</dbReference>
<dbReference type="CDD" id="cd00548">
    <property type="entry name" value="NrfA-like"/>
    <property type="match status" value="1"/>
</dbReference>
<dbReference type="FunFam" id="1.10.1130.10:FF:000002">
    <property type="entry name" value="Cytochrome c-552"/>
    <property type="match status" value="1"/>
</dbReference>
<dbReference type="FunFam" id="1.20.140.10:FF:000014">
    <property type="entry name" value="Cytochrome c-552"/>
    <property type="match status" value="1"/>
</dbReference>
<dbReference type="Gene3D" id="1.20.140.10">
    <property type="entry name" value="Butyryl-CoA Dehydrogenase, subunit A, domain 3"/>
    <property type="match status" value="1"/>
</dbReference>
<dbReference type="Gene3D" id="1.10.1130.10">
    <property type="entry name" value="Flavocytochrome C3, Chain A"/>
    <property type="match status" value="1"/>
</dbReference>
<dbReference type="HAMAP" id="MF_01182">
    <property type="entry name" value="Cytochrom_C552"/>
    <property type="match status" value="1"/>
</dbReference>
<dbReference type="InterPro" id="IPR003321">
    <property type="entry name" value="Cyt_c552"/>
</dbReference>
<dbReference type="InterPro" id="IPR017570">
    <property type="entry name" value="Cyt_c_NO2Rdtase_formate-dep"/>
</dbReference>
<dbReference type="InterPro" id="IPR036280">
    <property type="entry name" value="Multihaem_cyt_sf"/>
</dbReference>
<dbReference type="NCBIfam" id="TIGR03152">
    <property type="entry name" value="cyto_c552_HCOOH"/>
    <property type="match status" value="1"/>
</dbReference>
<dbReference type="NCBIfam" id="NF008339">
    <property type="entry name" value="PRK11125.1"/>
    <property type="match status" value="1"/>
</dbReference>
<dbReference type="PANTHER" id="PTHR30633:SF0">
    <property type="entry name" value="CYTOCHROME C-552"/>
    <property type="match status" value="1"/>
</dbReference>
<dbReference type="PANTHER" id="PTHR30633">
    <property type="entry name" value="CYTOCHROME C-552 RESPIRATORY NITRITE REDUCTASE"/>
    <property type="match status" value="1"/>
</dbReference>
<dbReference type="Pfam" id="PF02335">
    <property type="entry name" value="Cytochrom_C552"/>
    <property type="match status" value="1"/>
</dbReference>
<dbReference type="PIRSF" id="PIRSF000243">
    <property type="entry name" value="Cyt_c552"/>
    <property type="match status" value="1"/>
</dbReference>
<dbReference type="SUPFAM" id="SSF48695">
    <property type="entry name" value="Multiheme cytochromes"/>
    <property type="match status" value="1"/>
</dbReference>
<dbReference type="PROSITE" id="PS51008">
    <property type="entry name" value="MULTIHEME_CYTC"/>
    <property type="match status" value="1"/>
</dbReference>
<reference key="1">
    <citation type="submission" date="2006-08" db="EMBL/GenBank/DDBJ databases">
        <title>Complete sequence of chromosome 1 of Shewanella sp. MR-7.</title>
        <authorList>
            <person name="Copeland A."/>
            <person name="Lucas S."/>
            <person name="Lapidus A."/>
            <person name="Barry K."/>
            <person name="Detter J.C."/>
            <person name="Glavina del Rio T."/>
            <person name="Hammon N."/>
            <person name="Israni S."/>
            <person name="Dalin E."/>
            <person name="Tice H."/>
            <person name="Pitluck S."/>
            <person name="Kiss H."/>
            <person name="Brettin T."/>
            <person name="Bruce D."/>
            <person name="Han C."/>
            <person name="Tapia R."/>
            <person name="Gilna P."/>
            <person name="Schmutz J."/>
            <person name="Larimer F."/>
            <person name="Land M."/>
            <person name="Hauser L."/>
            <person name="Kyrpides N."/>
            <person name="Mikhailova N."/>
            <person name="Nealson K."/>
            <person name="Konstantinidis K."/>
            <person name="Klappenbach J."/>
            <person name="Tiedje J."/>
            <person name="Richardson P."/>
        </authorList>
    </citation>
    <scope>NUCLEOTIDE SEQUENCE [LARGE SCALE GENOMIC DNA]</scope>
    <source>
        <strain>MR-7</strain>
    </source>
</reference>
<proteinExistence type="inferred from homology"/>
<evidence type="ECO:0000255" key="1">
    <source>
        <dbReference type="HAMAP-Rule" id="MF_01182"/>
    </source>
</evidence>
<evidence type="ECO:0000305" key="2"/>